<gene>
    <name evidence="1" type="primary">queC</name>
    <name type="ordered locus">HPSH_03670</name>
</gene>
<reference key="1">
    <citation type="submission" date="2008-05" db="EMBL/GenBank/DDBJ databases">
        <title>Genome sequence of Helicobacter pylori from the remote Amazon: traces of Asian ancestry of the first Americans.</title>
        <authorList>
            <person name="Kersulyte D."/>
            <person name="Kalia A."/>
            <person name="Gilman R.H."/>
            <person name="Berg D.E."/>
        </authorList>
    </citation>
    <scope>NUCLEOTIDE SEQUENCE [LARGE SCALE GENOMIC DNA]</scope>
    <source>
        <strain>Shi470</strain>
    </source>
</reference>
<feature type="chain" id="PRO_1000186606" description="7-cyano-7-deazaguanine synthase">
    <location>
        <begin position="1"/>
        <end position="226"/>
    </location>
</feature>
<feature type="binding site" evidence="1">
    <location>
        <begin position="10"/>
        <end position="20"/>
    </location>
    <ligand>
        <name>ATP</name>
        <dbReference type="ChEBI" id="CHEBI:30616"/>
    </ligand>
</feature>
<feature type="binding site" evidence="1">
    <location>
        <position position="190"/>
    </location>
    <ligand>
        <name>Zn(2+)</name>
        <dbReference type="ChEBI" id="CHEBI:29105"/>
    </ligand>
</feature>
<feature type="binding site" evidence="1">
    <location>
        <position position="205"/>
    </location>
    <ligand>
        <name>Zn(2+)</name>
        <dbReference type="ChEBI" id="CHEBI:29105"/>
    </ligand>
</feature>
<feature type="binding site" evidence="1">
    <location>
        <position position="208"/>
    </location>
    <ligand>
        <name>Zn(2+)</name>
        <dbReference type="ChEBI" id="CHEBI:29105"/>
    </ligand>
</feature>
<feature type="binding site" evidence="1">
    <location>
        <position position="211"/>
    </location>
    <ligand>
        <name>Zn(2+)</name>
        <dbReference type="ChEBI" id="CHEBI:29105"/>
    </ligand>
</feature>
<name>QUEC_HELPS</name>
<protein>
    <recommendedName>
        <fullName evidence="1">7-cyano-7-deazaguanine synthase</fullName>
        <ecNumber evidence="1">6.3.4.20</ecNumber>
    </recommendedName>
    <alternativeName>
        <fullName evidence="1">7-cyano-7-carbaguanine synthase</fullName>
    </alternativeName>
    <alternativeName>
        <fullName evidence="1">PreQ(0) synthase</fullName>
    </alternativeName>
    <alternativeName>
        <fullName evidence="1">Queuosine biosynthesis protein QueC</fullName>
    </alternativeName>
</protein>
<proteinExistence type="inferred from homology"/>
<evidence type="ECO:0000255" key="1">
    <source>
        <dbReference type="HAMAP-Rule" id="MF_01633"/>
    </source>
</evidence>
<dbReference type="EC" id="6.3.4.20" evidence="1"/>
<dbReference type="EMBL" id="CP001072">
    <property type="protein sequence ID" value="ACD48169.1"/>
    <property type="molecule type" value="Genomic_DNA"/>
</dbReference>
<dbReference type="RefSeq" id="WP_000434369.1">
    <property type="nucleotide sequence ID" value="NC_010698.2"/>
</dbReference>
<dbReference type="SMR" id="B2UTI7"/>
<dbReference type="KEGG" id="hps:HPSH_03670"/>
<dbReference type="HOGENOM" id="CLU_081854_0_0_7"/>
<dbReference type="UniPathway" id="UPA00391"/>
<dbReference type="GO" id="GO:0005524">
    <property type="term" value="F:ATP binding"/>
    <property type="evidence" value="ECO:0007669"/>
    <property type="project" value="UniProtKB-UniRule"/>
</dbReference>
<dbReference type="GO" id="GO:0016879">
    <property type="term" value="F:ligase activity, forming carbon-nitrogen bonds"/>
    <property type="evidence" value="ECO:0007669"/>
    <property type="project" value="UniProtKB-UniRule"/>
</dbReference>
<dbReference type="GO" id="GO:0008270">
    <property type="term" value="F:zinc ion binding"/>
    <property type="evidence" value="ECO:0007669"/>
    <property type="project" value="UniProtKB-UniRule"/>
</dbReference>
<dbReference type="GO" id="GO:0008616">
    <property type="term" value="P:queuosine biosynthetic process"/>
    <property type="evidence" value="ECO:0007669"/>
    <property type="project" value="UniProtKB-UniRule"/>
</dbReference>
<dbReference type="CDD" id="cd01995">
    <property type="entry name" value="QueC-like"/>
    <property type="match status" value="1"/>
</dbReference>
<dbReference type="FunFam" id="3.40.50.620:FF:000179">
    <property type="entry name" value="7-cyano-7-deazaguanine synthase"/>
    <property type="match status" value="1"/>
</dbReference>
<dbReference type="Gene3D" id="3.40.50.620">
    <property type="entry name" value="HUPs"/>
    <property type="match status" value="1"/>
</dbReference>
<dbReference type="HAMAP" id="MF_01633">
    <property type="entry name" value="QueC"/>
    <property type="match status" value="1"/>
</dbReference>
<dbReference type="InterPro" id="IPR018317">
    <property type="entry name" value="QueC"/>
</dbReference>
<dbReference type="InterPro" id="IPR014729">
    <property type="entry name" value="Rossmann-like_a/b/a_fold"/>
</dbReference>
<dbReference type="NCBIfam" id="TIGR00364">
    <property type="entry name" value="7-cyano-7-deazaguanine synthase QueC"/>
    <property type="match status" value="1"/>
</dbReference>
<dbReference type="PANTHER" id="PTHR42914">
    <property type="entry name" value="7-CYANO-7-DEAZAGUANINE SYNTHASE"/>
    <property type="match status" value="1"/>
</dbReference>
<dbReference type="PANTHER" id="PTHR42914:SF1">
    <property type="entry name" value="7-CYANO-7-DEAZAGUANINE SYNTHASE"/>
    <property type="match status" value="1"/>
</dbReference>
<dbReference type="Pfam" id="PF06508">
    <property type="entry name" value="QueC"/>
    <property type="match status" value="1"/>
</dbReference>
<dbReference type="PIRSF" id="PIRSF006293">
    <property type="entry name" value="ExsB"/>
    <property type="match status" value="1"/>
</dbReference>
<dbReference type="SUPFAM" id="SSF52402">
    <property type="entry name" value="Adenine nucleotide alpha hydrolases-like"/>
    <property type="match status" value="1"/>
</dbReference>
<accession>B2UTI7</accession>
<organism>
    <name type="scientific">Helicobacter pylori (strain Shi470)</name>
    <dbReference type="NCBI Taxonomy" id="512562"/>
    <lineage>
        <taxon>Bacteria</taxon>
        <taxon>Pseudomonadati</taxon>
        <taxon>Campylobacterota</taxon>
        <taxon>Epsilonproteobacteria</taxon>
        <taxon>Campylobacterales</taxon>
        <taxon>Helicobacteraceae</taxon>
        <taxon>Helicobacter</taxon>
    </lineage>
</organism>
<comment type="function">
    <text evidence="1">Catalyzes the ATP-dependent conversion of 7-carboxy-7-deazaguanine (CDG) to 7-cyano-7-deazaguanine (preQ(0)).</text>
</comment>
<comment type="catalytic activity">
    <reaction evidence="1">
        <text>7-carboxy-7-deazaguanine + NH4(+) + ATP = 7-cyano-7-deazaguanine + ADP + phosphate + H2O + H(+)</text>
        <dbReference type="Rhea" id="RHEA:27982"/>
        <dbReference type="ChEBI" id="CHEBI:15377"/>
        <dbReference type="ChEBI" id="CHEBI:15378"/>
        <dbReference type="ChEBI" id="CHEBI:28938"/>
        <dbReference type="ChEBI" id="CHEBI:30616"/>
        <dbReference type="ChEBI" id="CHEBI:43474"/>
        <dbReference type="ChEBI" id="CHEBI:45075"/>
        <dbReference type="ChEBI" id="CHEBI:61036"/>
        <dbReference type="ChEBI" id="CHEBI:456216"/>
        <dbReference type="EC" id="6.3.4.20"/>
    </reaction>
</comment>
<comment type="cofactor">
    <cofactor evidence="1">
        <name>Zn(2+)</name>
        <dbReference type="ChEBI" id="CHEBI:29105"/>
    </cofactor>
    <text evidence="1">Binds 1 zinc ion per subunit.</text>
</comment>
<comment type="pathway">
    <text evidence="1">Purine metabolism; 7-cyano-7-deazaguanine biosynthesis.</text>
</comment>
<comment type="similarity">
    <text evidence="1">Belongs to the QueC family.</text>
</comment>
<sequence length="226" mass="25316">MEQEICAISFSGGQDSTTLAVWAKKRFKKVYLVGFDYAQKHSVELECAQKIASLLQLPYEIIPLDFLENITHSALFKNSNDLMGHSHAQNKDLPNSFVPNRNAIFITLLHSYAQKIGASNIALGVSQADFSGYPDCKEDFIKSIEHALNLGSNTAIKILTPLMFLNKAQEFQMAKDLGVLDLVIKETHTCYQGERKILHAYGYGCGECPACQLRKKGYEEFESNKK</sequence>
<keyword id="KW-0067">ATP-binding</keyword>
<keyword id="KW-0436">Ligase</keyword>
<keyword id="KW-0479">Metal-binding</keyword>
<keyword id="KW-0547">Nucleotide-binding</keyword>
<keyword id="KW-0671">Queuosine biosynthesis</keyword>
<keyword id="KW-0862">Zinc</keyword>